<feature type="chain" id="PRO_0000066202" description="YopE regulator">
    <location>
        <begin position="1"/>
        <end position="130"/>
    </location>
</feature>
<feature type="helix" evidence="1">
    <location>
        <begin position="5"/>
        <end position="14"/>
    </location>
</feature>
<feature type="strand" evidence="1">
    <location>
        <begin position="25"/>
        <end position="31"/>
    </location>
</feature>
<feature type="strand" evidence="1">
    <location>
        <begin position="34"/>
        <end position="40"/>
    </location>
</feature>
<feature type="strand" evidence="1">
    <location>
        <begin position="45"/>
        <end position="50"/>
    </location>
</feature>
<feature type="helix" evidence="1">
    <location>
        <begin position="60"/>
        <end position="65"/>
    </location>
</feature>
<feature type="strand" evidence="1">
    <location>
        <begin position="77"/>
        <end position="81"/>
    </location>
</feature>
<feature type="turn" evidence="1">
    <location>
        <begin position="82"/>
        <end position="85"/>
    </location>
</feature>
<feature type="strand" evidence="1">
    <location>
        <begin position="86"/>
        <end position="94"/>
    </location>
</feature>
<feature type="helix" evidence="1">
    <location>
        <begin position="102"/>
        <end position="117"/>
    </location>
</feature>
<accession>P31490</accession>
<accession>A1JUA8</accession>
<name>YERA_YERE8</name>
<protein>
    <recommendedName>
        <fullName>YopE regulator</fullName>
    </recommendedName>
</protein>
<evidence type="ECO:0007829" key="1">
    <source>
        <dbReference type="PDB" id="1N5B"/>
    </source>
</evidence>
<sequence length="130" mass="14676">MYSFEQAITQLFQQLSLSIPDTIEPVIGVKVGEFACHITEHPVGQILMFTLPSLDNNNEKETLLSHNIFSQDILKPILSWDEVGGHPVLWNRQPLNNLDNNSLYTQLEMLVQGAERLQTSSLISPPRSFS</sequence>
<comment type="function">
    <text>Positive regulator of YopE.</text>
</comment>
<reference key="1">
    <citation type="journal article" date="1990" name="J. Bacteriol.">
        <title>Genetic analysis of the yopE region of Yersinia spp.: identification of a novel conserved locus, yerA, regulating yopE expression.</title>
        <authorList>
            <person name="Forsberg A."/>
            <person name="Wolf-Watz H."/>
        </authorList>
    </citation>
    <scope>NUCLEOTIDE SEQUENCE [GENOMIC DNA]</scope>
</reference>
<reference key="2">
    <citation type="journal article" date="2006" name="PLoS Genet.">
        <title>The complete genome sequence and comparative genome analysis of the high pathogenicity Yersinia enterocolitica strain 8081.</title>
        <authorList>
            <person name="Thomson N.R."/>
            <person name="Howard S."/>
            <person name="Wren B.W."/>
            <person name="Holden M.T.G."/>
            <person name="Crossman L."/>
            <person name="Challis G.L."/>
            <person name="Churcher C."/>
            <person name="Mungall K."/>
            <person name="Brooks K."/>
            <person name="Chillingworth T."/>
            <person name="Feltwell T."/>
            <person name="Abdellah Z."/>
            <person name="Hauser H."/>
            <person name="Jagels K."/>
            <person name="Maddison M."/>
            <person name="Moule S."/>
            <person name="Sanders M."/>
            <person name="Whitehead S."/>
            <person name="Quail M.A."/>
            <person name="Dougan G."/>
            <person name="Parkhill J."/>
            <person name="Prentice M.B."/>
        </authorList>
    </citation>
    <scope>NUCLEOTIDE SEQUENCE [LARGE SCALE GENOMIC DNA]</scope>
    <source>
        <strain>NCTC 13174 / 8081</strain>
    </source>
</reference>
<gene>
    <name type="primary">yerA</name>
    <name type="ordered locus">YEP0052</name>
</gene>
<dbReference type="EMBL" id="AH000955">
    <property type="protein sequence ID" value="AAA27673.1"/>
    <property type="molecule type" value="Genomic_DNA"/>
</dbReference>
<dbReference type="EMBL" id="AM286416">
    <property type="protein sequence ID" value="CAL10074.1"/>
    <property type="molecule type" value="Genomic_DNA"/>
</dbReference>
<dbReference type="RefSeq" id="NP_783701.1">
    <property type="nucleotide sequence ID" value="NC_004564.1"/>
</dbReference>
<dbReference type="RefSeq" id="NP_863548.1">
    <property type="nucleotide sequence ID" value="NC_005017.1"/>
</dbReference>
<dbReference type="RefSeq" id="WP_005176499.1">
    <property type="nucleotide sequence ID" value="NC_008791.1"/>
</dbReference>
<dbReference type="RefSeq" id="YP_001004104.1">
    <property type="nucleotide sequence ID" value="NC_008791.1"/>
</dbReference>
<dbReference type="PDB" id="1N5B">
    <property type="method" value="X-ray"/>
    <property type="resolution" value="2.00 A"/>
    <property type="chains" value="A/B/C/D=1-130"/>
</dbReference>
<dbReference type="PDB" id="7EVA">
    <property type="method" value="X-ray"/>
    <property type="resolution" value="2.08 A"/>
    <property type="chains" value="C=1-130"/>
</dbReference>
<dbReference type="PDBsum" id="1N5B"/>
<dbReference type="PDBsum" id="7EVA"/>
<dbReference type="BMRB" id="P31490"/>
<dbReference type="SMR" id="P31490"/>
<dbReference type="KEGG" id="yen:YEP0052"/>
<dbReference type="PATRIC" id="fig|393305.7.peg.53"/>
<dbReference type="eggNOG" id="ENOG50332A3">
    <property type="taxonomic scope" value="Bacteria"/>
</dbReference>
<dbReference type="HOGENOM" id="CLU_159406_0_0_6"/>
<dbReference type="OrthoDB" id="6983386at2"/>
<dbReference type="EvolutionaryTrace" id="P31490"/>
<dbReference type="PRO" id="PR:P31490"/>
<dbReference type="Proteomes" id="UP000000642">
    <property type="component" value="Plasmid pYVe8081"/>
</dbReference>
<dbReference type="GO" id="GO:0030254">
    <property type="term" value="P:protein secretion by the type III secretion system"/>
    <property type="evidence" value="ECO:0007669"/>
    <property type="project" value="InterPro"/>
</dbReference>
<dbReference type="CDD" id="cd17029">
    <property type="entry name" value="T3SC_IA_SycE_SpcS-like"/>
    <property type="match status" value="1"/>
</dbReference>
<dbReference type="Gene3D" id="3.30.1460.10">
    <property type="match status" value="1"/>
</dbReference>
<dbReference type="InterPro" id="IPR005416">
    <property type="entry name" value="T3SS_chp_SycE"/>
</dbReference>
<dbReference type="InterPro" id="IPR010261">
    <property type="entry name" value="Tir_chaperone"/>
</dbReference>
<dbReference type="Pfam" id="PF05932">
    <property type="entry name" value="CesT"/>
    <property type="match status" value="1"/>
</dbReference>
<dbReference type="PIRSF" id="PIRSF011271">
    <property type="entry name" value="T3SS_chp_SycE_GmN_bac"/>
    <property type="match status" value="1"/>
</dbReference>
<dbReference type="PRINTS" id="PR01596">
    <property type="entry name" value="SYCECHAPRONE"/>
</dbReference>
<dbReference type="SUPFAM" id="SSF69635">
    <property type="entry name" value="Type III secretory system chaperone-like"/>
    <property type="match status" value="1"/>
</dbReference>
<geneLocation type="plasmid">
    <name>pYVe8081</name>
</geneLocation>
<proteinExistence type="evidence at protein level"/>
<organism>
    <name type="scientific">Yersinia enterocolitica serotype O:8 / biotype 1B (strain NCTC 13174 / 8081)</name>
    <dbReference type="NCBI Taxonomy" id="393305"/>
    <lineage>
        <taxon>Bacteria</taxon>
        <taxon>Pseudomonadati</taxon>
        <taxon>Pseudomonadota</taxon>
        <taxon>Gammaproteobacteria</taxon>
        <taxon>Enterobacterales</taxon>
        <taxon>Yersiniaceae</taxon>
        <taxon>Yersinia</taxon>
    </lineage>
</organism>
<keyword id="KW-0002">3D-structure</keyword>
<keyword id="KW-0010">Activator</keyword>
<keyword id="KW-0614">Plasmid</keyword>
<keyword id="KW-0804">Transcription</keyword>
<keyword id="KW-0805">Transcription regulation</keyword>
<keyword id="KW-0843">Virulence</keyword>